<comment type="function">
    <text evidence="1">Plays an essential role in transcription initiation and cap-stealing mechanism, in which cellular capped pre-mRNAs are used to generate primers for viral transcription. Recognizes and binds a wide range of cap structures of target pre-RNAs which are subsequently cleaved after 10-13 nucleotides by the viral protein PA. Plays a role in the initiation of the viral genome replication and modulates the activity of the ribonucleoprotein (RNP) complex.</text>
</comment>
<comment type="subunit">
    <text evidence="1">Influenza RNA polymerase is composed of three subunits: PB1, PB2 and PA. Interacts (via N-terminus) with PB1 (via C-terminus). Interacts with nucleoprotein NP (via N-terminus).</text>
</comment>
<comment type="subcellular location">
    <subcellularLocation>
        <location evidence="1">Virion</location>
    </subcellularLocation>
    <subcellularLocation>
        <location evidence="1">Host nucleus</location>
    </subcellularLocation>
</comment>
<comment type="similarity">
    <text evidence="1">Belongs to the influenza viruses PB2 family.</text>
</comment>
<dbReference type="EMBL" id="AF005737">
    <property type="protein sequence ID" value="AAB72044.1"/>
    <property type="molecule type" value="mRNA"/>
</dbReference>
<dbReference type="PDB" id="6QWL">
    <property type="method" value="EM"/>
    <property type="resolution" value="4.10 A"/>
    <property type="chains" value="Q=1-770"/>
</dbReference>
<dbReference type="PDBsum" id="6QWL"/>
<dbReference type="EMDB" id="EMD-4660"/>
<dbReference type="SMR" id="O36431"/>
<dbReference type="IntAct" id="O36431">
    <property type="interactions" value="1"/>
</dbReference>
<dbReference type="GO" id="GO:0042025">
    <property type="term" value="C:host cell nucleus"/>
    <property type="evidence" value="ECO:0007669"/>
    <property type="project" value="UniProtKB-SubCell"/>
</dbReference>
<dbReference type="GO" id="GO:0044423">
    <property type="term" value="C:virion component"/>
    <property type="evidence" value="ECO:0007669"/>
    <property type="project" value="UniProtKB-UniRule"/>
</dbReference>
<dbReference type="GO" id="GO:0003723">
    <property type="term" value="F:RNA binding"/>
    <property type="evidence" value="ECO:0007669"/>
    <property type="project" value="UniProtKB-UniRule"/>
</dbReference>
<dbReference type="GO" id="GO:0003968">
    <property type="term" value="F:RNA-directed RNA polymerase activity"/>
    <property type="evidence" value="ECO:0007669"/>
    <property type="project" value="UniProtKB-UniRule"/>
</dbReference>
<dbReference type="GO" id="GO:0006370">
    <property type="term" value="P:7-methylguanosine mRNA capping"/>
    <property type="evidence" value="ECO:0007669"/>
    <property type="project" value="UniProtKB-UniRule"/>
</dbReference>
<dbReference type="GO" id="GO:0075526">
    <property type="term" value="P:cap snatching"/>
    <property type="evidence" value="ECO:0007669"/>
    <property type="project" value="UniProtKB-UniRule"/>
</dbReference>
<dbReference type="GO" id="GO:0006351">
    <property type="term" value="P:DNA-templated transcription"/>
    <property type="evidence" value="ECO:0007669"/>
    <property type="project" value="UniProtKB-UniRule"/>
</dbReference>
<dbReference type="GO" id="GO:0039657">
    <property type="term" value="P:symbiont-mediated suppression of host gene expression"/>
    <property type="evidence" value="ECO:0007669"/>
    <property type="project" value="UniProtKB-KW"/>
</dbReference>
<dbReference type="GO" id="GO:0039523">
    <property type="term" value="P:symbiont-mediated suppression of host mRNA transcription via inhibition of RNA polymerase II activity"/>
    <property type="evidence" value="ECO:0007669"/>
    <property type="project" value="UniProtKB-UniRule"/>
</dbReference>
<dbReference type="GO" id="GO:0039694">
    <property type="term" value="P:viral RNA genome replication"/>
    <property type="evidence" value="ECO:0007669"/>
    <property type="project" value="InterPro"/>
</dbReference>
<dbReference type="Gene3D" id="3.30.30.90">
    <property type="entry name" value="Polymerase Basic Protein 2, C-terminal domain"/>
    <property type="match status" value="1"/>
</dbReference>
<dbReference type="HAMAP" id="MF_04062">
    <property type="entry name" value="INV_PB2"/>
    <property type="match status" value="1"/>
</dbReference>
<dbReference type="InterPro" id="IPR049110">
    <property type="entry name" value="Flu_PB2_2nd"/>
</dbReference>
<dbReference type="InterPro" id="IPR049114">
    <property type="entry name" value="Flu_PB2_6th"/>
</dbReference>
<dbReference type="InterPro" id="IPR049115">
    <property type="entry name" value="Flu_PB2_C"/>
</dbReference>
<dbReference type="InterPro" id="IPR048298">
    <property type="entry name" value="Flu_PB2_CAP-bd"/>
</dbReference>
<dbReference type="InterPro" id="IPR049111">
    <property type="entry name" value="Flu_PB2_middle"/>
</dbReference>
<dbReference type="InterPro" id="IPR049106">
    <property type="entry name" value="Flu_PB2_N"/>
</dbReference>
<dbReference type="InterPro" id="IPR001591">
    <property type="entry name" value="INV_PB2"/>
</dbReference>
<dbReference type="InterPro" id="IPR049113">
    <property type="entry name" value="PB2_helical"/>
</dbReference>
<dbReference type="InterPro" id="IPR037258">
    <property type="entry name" value="PDB2_C"/>
</dbReference>
<dbReference type="Pfam" id="PF20947">
    <property type="entry name" value="Flu_PB2_1st"/>
    <property type="match status" value="1"/>
</dbReference>
<dbReference type="Pfam" id="PF20948">
    <property type="entry name" value="Flu_PB2_2nd"/>
    <property type="match status" value="1"/>
</dbReference>
<dbReference type="Pfam" id="PF20949">
    <property type="entry name" value="Flu_PB2_3rd"/>
    <property type="match status" value="1"/>
</dbReference>
<dbReference type="Pfam" id="PF20950">
    <property type="entry name" value="Flu_PB2_4th"/>
    <property type="match status" value="1"/>
</dbReference>
<dbReference type="Pfam" id="PF00604">
    <property type="entry name" value="Flu_PB2_5th"/>
    <property type="match status" value="1"/>
</dbReference>
<dbReference type="Pfam" id="PF20951">
    <property type="entry name" value="Flu_PB2_6th"/>
    <property type="match status" value="1"/>
</dbReference>
<dbReference type="Pfam" id="PF20952">
    <property type="entry name" value="Flu_PB2_7th"/>
    <property type="match status" value="1"/>
</dbReference>
<dbReference type="SUPFAM" id="SSF160453">
    <property type="entry name" value="PB2 C-terminal domain-like"/>
    <property type="match status" value="1"/>
</dbReference>
<keyword id="KW-0002">3D-structure</keyword>
<keyword id="KW-1157">Cap snatching</keyword>
<keyword id="KW-1262">Eukaryotic host gene expression shutoff by virus</keyword>
<keyword id="KW-1191">Eukaryotic host transcription shutoff by virus</keyword>
<keyword id="KW-1190">Host gene expression shutoff by virus</keyword>
<keyword id="KW-1048">Host nucleus</keyword>
<keyword id="KW-0945">Host-virus interaction</keyword>
<keyword id="KW-1104">Inhibition of host RNA polymerase II by virus</keyword>
<keyword id="KW-0506">mRNA capping</keyword>
<keyword id="KW-0507">mRNA processing</keyword>
<keyword id="KW-1195">Viral transcription</keyword>
<keyword id="KW-0946">Virion</keyword>
<sequence length="770" mass="87953">MTLAKIELLKQLLRDNEAKTVLKQTTVDQYNIIRKFNTSRIEKNPSLRMKWAMCSNFPLALTKGDMANRIPLEYKGIQLKTNAEDIGTKGQMCSIAAVTWWNTYGPIGDTEGFEKVYESFFLRKMRLDNATWGRITFGPVERVRKRVLLNPLTKEMPPDEASNVIMEILFPKEAGIPRESTWIHRELIKEKREKLKGTMITPIVLAYMLERELVARRRFLPVAGATSAEFIEMLHCLQGENWRQIYHPGGNKLTESRSQSMIVACRKIIRRSIVASNPLELAVEIANKTVIDTEPLKSCLTAIDGGDVACDIIRAALGLKIRQRQRFGRLELKRISGRGFKNDEEILIGNGTIQKIGIWDGEEEFHVRCGECRGILKKSKMRMEKLLINSAKKEDMKDLIILCMVFSQDTRMFQGVRGEINFLNRAGQLLSPMYQLQRYFLNRSNDLFDQWGYEESPKASELHGINELMNASDYTLKGVVVTKNVIDDFSSTETEKVSITKNLSLIKRTGEVIMGANDVSELESQAQLMITYDTPKMWEMGTTKELVQNTYQWVLKNLVTLKAQFLLGKEDMFQWDAFEAFESIIPQKMAGQYSGFARAVLKQMRDQEVMKTDQFIKLLPFCFSPPKLRSNGEPYQFLRLVLKGGGENFIEVRKGSPLFSYNPQTEVLTICGRMMSLKGKIEDEERNRSMGNAVLAGFLVSGKYDPDLGDFKTIEELEKLKPGEKANILLYQGKPVKVVKRKRYSALSNDISQGIKRQRMTVESMGWALS</sequence>
<evidence type="ECO:0000255" key="1">
    <source>
        <dbReference type="HAMAP-Rule" id="MF_04062"/>
    </source>
</evidence>
<protein>
    <recommendedName>
        <fullName evidence="1">Polymerase basic protein 2</fullName>
    </recommendedName>
    <alternativeName>
        <fullName evidence="1">RNA-directed RNA polymerase subunit P3</fullName>
    </alternativeName>
</protein>
<proteinExistence type="evidence at protein level"/>
<name>PB2_INBP9</name>
<feature type="chain" id="PRO_0000078846" description="Polymerase basic protein 2">
    <location>
        <begin position="1"/>
        <end position="770"/>
    </location>
</feature>
<feature type="short sequence motif" description="Nuclear localization signal" evidence="1">
    <location>
        <begin position="740"/>
        <end position="743"/>
    </location>
</feature>
<reference key="1">
    <citation type="journal article" date="1997" name="Virology">
        <title>The three subunits of the polymerase and the nucleoprotein of influenza B virus are the minimum set of viral proteins required for expression of a model RNA template.</title>
        <authorList>
            <person name="Jambrina E."/>
            <person name="Barcena J."/>
            <person name="Uez O."/>
            <person name="Portela A."/>
        </authorList>
    </citation>
    <scope>NUCLEOTIDE SEQUENCE [MRNA]</scope>
</reference>
<accession>O36431</accession>
<organismHost>
    <name type="scientific">Homo sapiens</name>
    <name type="common">Human</name>
    <dbReference type="NCBI Taxonomy" id="9606"/>
</organismHost>
<organism>
    <name type="scientific">Influenza B virus (strain B/Panama/45/1990)</name>
    <dbReference type="NCBI Taxonomy" id="408929"/>
    <lineage>
        <taxon>Viruses</taxon>
        <taxon>Riboviria</taxon>
        <taxon>Orthornavirae</taxon>
        <taxon>Negarnaviricota</taxon>
        <taxon>Polyploviricotina</taxon>
        <taxon>Insthoviricetes</taxon>
        <taxon>Articulavirales</taxon>
        <taxon>Orthomyxoviridae</taxon>
        <taxon>Betainfluenzavirus</taxon>
        <taxon>Betainfluenzavirus influenzae</taxon>
        <taxon>Influenza B virus</taxon>
    </lineage>
</organism>
<gene>
    <name evidence="1" type="primary">PB2</name>
</gene>